<keyword id="KW-0963">Cytoplasm</keyword>
<keyword id="KW-0489">Methyltransferase</keyword>
<keyword id="KW-0698">rRNA processing</keyword>
<keyword id="KW-0949">S-adenosyl-L-methionine</keyword>
<keyword id="KW-0808">Transferase</keyword>
<organism>
    <name type="scientific">Helicobacter pylori (strain HPAG1)</name>
    <dbReference type="NCBI Taxonomy" id="357544"/>
    <lineage>
        <taxon>Bacteria</taxon>
        <taxon>Pseudomonadati</taxon>
        <taxon>Campylobacterota</taxon>
        <taxon>Epsilonproteobacteria</taxon>
        <taxon>Campylobacterales</taxon>
        <taxon>Helicobacteraceae</taxon>
        <taxon>Helicobacter</taxon>
    </lineage>
</organism>
<dbReference type="EC" id="2.1.1.170" evidence="1"/>
<dbReference type="EMBL" id="CP000241">
    <property type="protein sequence ID" value="ABF84451.1"/>
    <property type="molecule type" value="Genomic_DNA"/>
</dbReference>
<dbReference type="RefSeq" id="WP_001068796.1">
    <property type="nucleotide sequence ID" value="NC_008086.1"/>
</dbReference>
<dbReference type="SMR" id="Q1CUC1"/>
<dbReference type="KEGG" id="hpa:HPAG1_0384"/>
<dbReference type="HOGENOM" id="CLU_065341_2_1_7"/>
<dbReference type="GO" id="GO:0005829">
    <property type="term" value="C:cytosol"/>
    <property type="evidence" value="ECO:0007669"/>
    <property type="project" value="TreeGrafter"/>
</dbReference>
<dbReference type="GO" id="GO:0070043">
    <property type="term" value="F:rRNA (guanine-N7-)-methyltransferase activity"/>
    <property type="evidence" value="ECO:0007669"/>
    <property type="project" value="UniProtKB-UniRule"/>
</dbReference>
<dbReference type="FunFam" id="3.40.50.150:FF:000511">
    <property type="entry name" value="Ribosomal RNA small subunit methyltransferase G"/>
    <property type="match status" value="1"/>
</dbReference>
<dbReference type="Gene3D" id="3.40.50.150">
    <property type="entry name" value="Vaccinia Virus protein VP39"/>
    <property type="match status" value="1"/>
</dbReference>
<dbReference type="HAMAP" id="MF_00074">
    <property type="entry name" value="16SrRNA_methyltr_G"/>
    <property type="match status" value="1"/>
</dbReference>
<dbReference type="InterPro" id="IPR003682">
    <property type="entry name" value="rRNA_ssu_MeTfrase_G"/>
</dbReference>
<dbReference type="InterPro" id="IPR029063">
    <property type="entry name" value="SAM-dependent_MTases_sf"/>
</dbReference>
<dbReference type="NCBIfam" id="TIGR00138">
    <property type="entry name" value="rsmG_gidB"/>
    <property type="match status" value="1"/>
</dbReference>
<dbReference type="PANTHER" id="PTHR31760">
    <property type="entry name" value="S-ADENOSYL-L-METHIONINE-DEPENDENT METHYLTRANSFERASES SUPERFAMILY PROTEIN"/>
    <property type="match status" value="1"/>
</dbReference>
<dbReference type="PANTHER" id="PTHR31760:SF0">
    <property type="entry name" value="S-ADENOSYL-L-METHIONINE-DEPENDENT METHYLTRANSFERASES SUPERFAMILY PROTEIN"/>
    <property type="match status" value="1"/>
</dbReference>
<dbReference type="Pfam" id="PF02527">
    <property type="entry name" value="GidB"/>
    <property type="match status" value="1"/>
</dbReference>
<dbReference type="PIRSF" id="PIRSF003078">
    <property type="entry name" value="GidB"/>
    <property type="match status" value="1"/>
</dbReference>
<dbReference type="SUPFAM" id="SSF53335">
    <property type="entry name" value="S-adenosyl-L-methionine-dependent methyltransferases"/>
    <property type="match status" value="1"/>
</dbReference>
<protein>
    <recommendedName>
        <fullName evidence="1">Ribosomal RNA small subunit methyltransferase G</fullName>
        <ecNumber evidence="1">2.1.1.170</ecNumber>
    </recommendedName>
    <alternativeName>
        <fullName evidence="1">16S rRNA 7-methylguanosine methyltransferase</fullName>
        <shortName evidence="1">16S rRNA m7G methyltransferase</shortName>
    </alternativeName>
</protein>
<reference key="1">
    <citation type="journal article" date="2006" name="Proc. Natl. Acad. Sci. U.S.A.">
        <title>The complete genome sequence of a chronic atrophic gastritis Helicobacter pylori strain: evolution during disease progression.</title>
        <authorList>
            <person name="Oh J.D."/>
            <person name="Kling-Baeckhed H."/>
            <person name="Giannakis M."/>
            <person name="Xu J."/>
            <person name="Fulton R.S."/>
            <person name="Fulton L.A."/>
            <person name="Cordum H.S."/>
            <person name="Wang C."/>
            <person name="Elliott G."/>
            <person name="Edwards J."/>
            <person name="Mardis E.R."/>
            <person name="Engstrand L.G."/>
            <person name="Gordon J.I."/>
        </authorList>
    </citation>
    <scope>NUCLEOTIDE SEQUENCE [LARGE SCALE GENOMIC DNA]</scope>
    <source>
        <strain>HPAG1</strain>
    </source>
</reference>
<evidence type="ECO:0000255" key="1">
    <source>
        <dbReference type="HAMAP-Rule" id="MF_00074"/>
    </source>
</evidence>
<proteinExistence type="inferred from homology"/>
<gene>
    <name evidence="1" type="primary">rsmG</name>
    <name type="ordered locus">HPAG1_0384</name>
</gene>
<name>RSMG_HELPH</name>
<comment type="function">
    <text evidence="1">Specifically methylates the N7 position of guanine in position 527 of 16S rRNA.</text>
</comment>
<comment type="catalytic activity">
    <reaction evidence="1">
        <text>guanosine(527) in 16S rRNA + S-adenosyl-L-methionine = N(7)-methylguanosine(527) in 16S rRNA + S-adenosyl-L-homocysteine</text>
        <dbReference type="Rhea" id="RHEA:42732"/>
        <dbReference type="Rhea" id="RHEA-COMP:10209"/>
        <dbReference type="Rhea" id="RHEA-COMP:10210"/>
        <dbReference type="ChEBI" id="CHEBI:57856"/>
        <dbReference type="ChEBI" id="CHEBI:59789"/>
        <dbReference type="ChEBI" id="CHEBI:74269"/>
        <dbReference type="ChEBI" id="CHEBI:74480"/>
        <dbReference type="EC" id="2.1.1.170"/>
    </reaction>
</comment>
<comment type="subcellular location">
    <subcellularLocation>
        <location evidence="1">Cytoplasm</location>
    </subcellularLocation>
</comment>
<comment type="similarity">
    <text evidence="1">Belongs to the methyltransferase superfamily. RNA methyltransferase RsmG family.</text>
</comment>
<feature type="chain" id="PRO_0000342917" description="Ribosomal RNA small subunit methyltransferase G">
    <location>
        <begin position="1"/>
        <end position="178"/>
    </location>
</feature>
<feature type="binding site" evidence="1">
    <location>
        <position position="54"/>
    </location>
    <ligand>
        <name>S-adenosyl-L-methionine</name>
        <dbReference type="ChEBI" id="CHEBI:59789"/>
    </ligand>
</feature>
<feature type="binding site" evidence="1">
    <location>
        <position position="59"/>
    </location>
    <ligand>
        <name>S-adenosyl-L-methionine</name>
        <dbReference type="ChEBI" id="CHEBI:59789"/>
    </ligand>
</feature>
<feature type="binding site" evidence="1">
    <location>
        <begin position="105"/>
        <end position="106"/>
    </location>
    <ligand>
        <name>S-adenosyl-L-methionine</name>
        <dbReference type="ChEBI" id="CHEBI:59789"/>
    </ligand>
</feature>
<feature type="binding site" evidence="1">
    <location>
        <position position="120"/>
    </location>
    <ligand>
        <name>S-adenosyl-L-methionine</name>
        <dbReference type="ChEBI" id="CHEBI:59789"/>
    </ligand>
</feature>
<accession>Q1CUC1</accession>
<sequence length="178" mass="20522">MNPLLQDYARILLEWNQTHNLSGAKCLSELEPQITDALKPLEFIKDFKSCLDIGSGAGLPAIPLALEKPEVKFILLEPRIKRAAFLNYLKSVLPLKNIEIIKKRLENYQSPLQVDLITSRAVASSSFLIEKSQRFLKDKGYFLFYKGEQLKDEIACKDTECFMHQKRVYFYKSKESLC</sequence>